<sequence>MSQEAILEKVRSIVAEQLSVEASEIKPDSNFQNDLGADSLDTVELVMALEEAFDIEIPDEAAEGITTVGDAVKYIEDKQS</sequence>
<name>ACP_PROMA</name>
<comment type="function">
    <text evidence="1">Carrier of the growing fatty acid chain in fatty acid biosynthesis.</text>
</comment>
<comment type="pathway">
    <text evidence="1">Lipid metabolism; fatty acid biosynthesis.</text>
</comment>
<comment type="subcellular location">
    <subcellularLocation>
        <location evidence="1">Cytoplasm</location>
    </subcellularLocation>
</comment>
<comment type="PTM">
    <text evidence="1">4'-phosphopantetheine is transferred from CoA to a specific serine of apo-ACP by AcpS. This modification is essential for activity because fatty acids are bound in thioester linkage to the sulfhydryl of the prosthetic group.</text>
</comment>
<comment type="similarity">
    <text evidence="1">Belongs to the acyl carrier protein (ACP) family.</text>
</comment>
<dbReference type="EMBL" id="AE017126">
    <property type="protein sequence ID" value="AAQ00812.1"/>
    <property type="molecule type" value="Genomic_DNA"/>
</dbReference>
<dbReference type="RefSeq" id="NP_876159.1">
    <property type="nucleotide sequence ID" value="NC_005042.1"/>
</dbReference>
<dbReference type="RefSeq" id="WP_011125917.1">
    <property type="nucleotide sequence ID" value="NC_005042.1"/>
</dbReference>
<dbReference type="SMR" id="Q7V9R0"/>
<dbReference type="STRING" id="167539.Pro_1768"/>
<dbReference type="EnsemblBacteria" id="AAQ00812">
    <property type="protein sequence ID" value="AAQ00812"/>
    <property type="gene ID" value="Pro_1768"/>
</dbReference>
<dbReference type="KEGG" id="pma:Pro_1768"/>
<dbReference type="PATRIC" id="fig|167539.5.peg.1867"/>
<dbReference type="eggNOG" id="COG0236">
    <property type="taxonomic scope" value="Bacteria"/>
</dbReference>
<dbReference type="HOGENOM" id="CLU_108696_5_1_3"/>
<dbReference type="OrthoDB" id="9804551at2"/>
<dbReference type="UniPathway" id="UPA00094"/>
<dbReference type="Proteomes" id="UP000001420">
    <property type="component" value="Chromosome"/>
</dbReference>
<dbReference type="GO" id="GO:0005829">
    <property type="term" value="C:cytosol"/>
    <property type="evidence" value="ECO:0007669"/>
    <property type="project" value="TreeGrafter"/>
</dbReference>
<dbReference type="GO" id="GO:0016020">
    <property type="term" value="C:membrane"/>
    <property type="evidence" value="ECO:0007669"/>
    <property type="project" value="GOC"/>
</dbReference>
<dbReference type="GO" id="GO:0000035">
    <property type="term" value="F:acyl binding"/>
    <property type="evidence" value="ECO:0007669"/>
    <property type="project" value="TreeGrafter"/>
</dbReference>
<dbReference type="GO" id="GO:0000036">
    <property type="term" value="F:acyl carrier activity"/>
    <property type="evidence" value="ECO:0007669"/>
    <property type="project" value="UniProtKB-UniRule"/>
</dbReference>
<dbReference type="GO" id="GO:0031177">
    <property type="term" value="F:phosphopantetheine binding"/>
    <property type="evidence" value="ECO:0007669"/>
    <property type="project" value="InterPro"/>
</dbReference>
<dbReference type="GO" id="GO:0009245">
    <property type="term" value="P:lipid A biosynthetic process"/>
    <property type="evidence" value="ECO:0007669"/>
    <property type="project" value="TreeGrafter"/>
</dbReference>
<dbReference type="FunFam" id="1.10.1200.10:FF:000006">
    <property type="entry name" value="Acyl carrier protein"/>
    <property type="match status" value="1"/>
</dbReference>
<dbReference type="Gene3D" id="1.10.1200.10">
    <property type="entry name" value="ACP-like"/>
    <property type="match status" value="1"/>
</dbReference>
<dbReference type="HAMAP" id="MF_01217">
    <property type="entry name" value="Acyl_carrier"/>
    <property type="match status" value="1"/>
</dbReference>
<dbReference type="InterPro" id="IPR003231">
    <property type="entry name" value="ACP"/>
</dbReference>
<dbReference type="InterPro" id="IPR036736">
    <property type="entry name" value="ACP-like_sf"/>
</dbReference>
<dbReference type="InterPro" id="IPR020806">
    <property type="entry name" value="PKS_PP-bd"/>
</dbReference>
<dbReference type="InterPro" id="IPR009081">
    <property type="entry name" value="PP-bd_ACP"/>
</dbReference>
<dbReference type="InterPro" id="IPR006162">
    <property type="entry name" value="Ppantetheine_attach_site"/>
</dbReference>
<dbReference type="NCBIfam" id="TIGR00517">
    <property type="entry name" value="acyl_carrier"/>
    <property type="match status" value="1"/>
</dbReference>
<dbReference type="NCBIfam" id="NF002148">
    <property type="entry name" value="PRK00982.1-2"/>
    <property type="match status" value="1"/>
</dbReference>
<dbReference type="NCBIfam" id="NF002149">
    <property type="entry name" value="PRK00982.1-3"/>
    <property type="match status" value="1"/>
</dbReference>
<dbReference type="NCBIfam" id="NF002150">
    <property type="entry name" value="PRK00982.1-4"/>
    <property type="match status" value="1"/>
</dbReference>
<dbReference type="NCBIfam" id="NF002151">
    <property type="entry name" value="PRK00982.1-5"/>
    <property type="match status" value="1"/>
</dbReference>
<dbReference type="NCBIfam" id="NF009104">
    <property type="entry name" value="PRK12449.1"/>
    <property type="match status" value="1"/>
</dbReference>
<dbReference type="PANTHER" id="PTHR20863">
    <property type="entry name" value="ACYL CARRIER PROTEIN"/>
    <property type="match status" value="1"/>
</dbReference>
<dbReference type="PANTHER" id="PTHR20863:SF76">
    <property type="entry name" value="CARRIER DOMAIN-CONTAINING PROTEIN"/>
    <property type="match status" value="1"/>
</dbReference>
<dbReference type="Pfam" id="PF00550">
    <property type="entry name" value="PP-binding"/>
    <property type="match status" value="1"/>
</dbReference>
<dbReference type="SMART" id="SM00823">
    <property type="entry name" value="PKS_PP"/>
    <property type="match status" value="1"/>
</dbReference>
<dbReference type="SUPFAM" id="SSF47336">
    <property type="entry name" value="ACP-like"/>
    <property type="match status" value="1"/>
</dbReference>
<dbReference type="PROSITE" id="PS50075">
    <property type="entry name" value="CARRIER"/>
    <property type="match status" value="1"/>
</dbReference>
<dbReference type="PROSITE" id="PS00012">
    <property type="entry name" value="PHOSPHOPANTETHEINE"/>
    <property type="match status" value="1"/>
</dbReference>
<gene>
    <name evidence="1" type="primary">acpP</name>
    <name type="ordered locus">Pro_1768</name>
</gene>
<evidence type="ECO:0000255" key="1">
    <source>
        <dbReference type="HAMAP-Rule" id="MF_01217"/>
    </source>
</evidence>
<evidence type="ECO:0000255" key="2">
    <source>
        <dbReference type="PROSITE-ProRule" id="PRU00258"/>
    </source>
</evidence>
<accession>Q7V9R0</accession>
<feature type="chain" id="PRO_0000180165" description="Acyl carrier protein">
    <location>
        <begin position="1"/>
        <end position="80"/>
    </location>
</feature>
<feature type="domain" description="Carrier" evidence="2">
    <location>
        <begin position="4"/>
        <end position="79"/>
    </location>
</feature>
<feature type="modified residue" description="O-(pantetheine 4'-phosphoryl)serine" evidence="2">
    <location>
        <position position="39"/>
    </location>
</feature>
<proteinExistence type="inferred from homology"/>
<keyword id="KW-0963">Cytoplasm</keyword>
<keyword id="KW-0275">Fatty acid biosynthesis</keyword>
<keyword id="KW-0276">Fatty acid metabolism</keyword>
<keyword id="KW-0444">Lipid biosynthesis</keyword>
<keyword id="KW-0443">Lipid metabolism</keyword>
<keyword id="KW-0596">Phosphopantetheine</keyword>
<keyword id="KW-0597">Phosphoprotein</keyword>
<keyword id="KW-1185">Reference proteome</keyword>
<protein>
    <recommendedName>
        <fullName evidence="1">Acyl carrier protein</fullName>
        <shortName evidence="1">ACP</shortName>
    </recommendedName>
</protein>
<organism>
    <name type="scientific">Prochlorococcus marinus (strain SARG / CCMP1375 / SS120)</name>
    <dbReference type="NCBI Taxonomy" id="167539"/>
    <lineage>
        <taxon>Bacteria</taxon>
        <taxon>Bacillati</taxon>
        <taxon>Cyanobacteriota</taxon>
        <taxon>Cyanophyceae</taxon>
        <taxon>Synechococcales</taxon>
        <taxon>Prochlorococcaceae</taxon>
        <taxon>Prochlorococcus</taxon>
    </lineage>
</organism>
<reference key="1">
    <citation type="journal article" date="2003" name="Proc. Natl. Acad. Sci. U.S.A.">
        <title>Genome sequence of the cyanobacterium Prochlorococcus marinus SS120, a nearly minimal oxyphototrophic genome.</title>
        <authorList>
            <person name="Dufresne A."/>
            <person name="Salanoubat M."/>
            <person name="Partensky F."/>
            <person name="Artiguenave F."/>
            <person name="Axmann I.M."/>
            <person name="Barbe V."/>
            <person name="Duprat S."/>
            <person name="Galperin M.Y."/>
            <person name="Koonin E.V."/>
            <person name="Le Gall F."/>
            <person name="Makarova K.S."/>
            <person name="Ostrowski M."/>
            <person name="Oztas S."/>
            <person name="Robert C."/>
            <person name="Rogozin I.B."/>
            <person name="Scanlan D.J."/>
            <person name="Tandeau de Marsac N."/>
            <person name="Weissenbach J."/>
            <person name="Wincker P."/>
            <person name="Wolf Y.I."/>
            <person name="Hess W.R."/>
        </authorList>
    </citation>
    <scope>NUCLEOTIDE SEQUENCE [LARGE SCALE GENOMIC DNA]</scope>
    <source>
        <strain>SARG / CCMP1375 / SS120</strain>
    </source>
</reference>